<evidence type="ECO:0000255" key="1">
    <source>
        <dbReference type="HAMAP-Rule" id="MF_03113"/>
    </source>
</evidence>
<keyword id="KW-0175">Coiled coil</keyword>
<keyword id="KW-0256">Endoplasmic reticulum</keyword>
<keyword id="KW-0472">Membrane</keyword>
<keyword id="KW-1185">Reference proteome</keyword>
<keyword id="KW-0812">Transmembrane</keyword>
<keyword id="KW-1133">Transmembrane helix</keyword>
<keyword id="KW-0813">Transport</keyword>
<proteinExistence type="inferred from homology"/>
<comment type="function">
    <text evidence="1">Required for the post-translational delivery of tail-anchored (TA) proteins to the endoplasmic reticulum. Acts as a membrane receptor for soluble get3, which recognizes and selectively binds the transmembrane domain of TA proteins in the cytosol.</text>
</comment>
<comment type="subunit">
    <text evidence="1">Interacts with get3.</text>
</comment>
<comment type="subcellular location">
    <subcellularLocation>
        <location evidence="1">Endoplasmic reticulum membrane</location>
        <topology evidence="1">Multi-pass membrane protein</topology>
    </subcellularLocation>
</comment>
<comment type="similarity">
    <text evidence="1">Belongs to the WRB/GET1 family.</text>
</comment>
<accession>A1CGU5</accession>
<sequence>MLSLILTIFFVHVAIYLVNTAGASTIDTALWALYLKLPTSTAKNAREQSRLKREVVQLNREMNNTSSQDEFAKWAKLRRRHDKAKDEYETINQALTSQKTSFDWAVKIARWLSTSGLKIFLQFYYSKTPVFALPAGWFPSIVEWMLSFPRAPRGSVSVQVWNSVCATAIAVMAEIFAAMLVRMRGQAAARTPAAKAQKTQ</sequence>
<name>GET1_ASPCL</name>
<organism>
    <name type="scientific">Aspergillus clavatus (strain ATCC 1007 / CBS 513.65 / DSM 816 / NCTC 3887 / NRRL 1 / QM 1276 / 107)</name>
    <dbReference type="NCBI Taxonomy" id="344612"/>
    <lineage>
        <taxon>Eukaryota</taxon>
        <taxon>Fungi</taxon>
        <taxon>Dikarya</taxon>
        <taxon>Ascomycota</taxon>
        <taxon>Pezizomycotina</taxon>
        <taxon>Eurotiomycetes</taxon>
        <taxon>Eurotiomycetidae</taxon>
        <taxon>Eurotiales</taxon>
        <taxon>Aspergillaceae</taxon>
        <taxon>Aspergillus</taxon>
        <taxon>Aspergillus subgen. Fumigati</taxon>
    </lineage>
</organism>
<reference key="1">
    <citation type="journal article" date="2008" name="PLoS Genet.">
        <title>Genomic islands in the pathogenic filamentous fungus Aspergillus fumigatus.</title>
        <authorList>
            <person name="Fedorova N.D."/>
            <person name="Khaldi N."/>
            <person name="Joardar V.S."/>
            <person name="Maiti R."/>
            <person name="Amedeo P."/>
            <person name="Anderson M.J."/>
            <person name="Crabtree J."/>
            <person name="Silva J.C."/>
            <person name="Badger J.H."/>
            <person name="Albarraq A."/>
            <person name="Angiuoli S."/>
            <person name="Bussey H."/>
            <person name="Bowyer P."/>
            <person name="Cotty P.J."/>
            <person name="Dyer P.S."/>
            <person name="Egan A."/>
            <person name="Galens K."/>
            <person name="Fraser-Liggett C.M."/>
            <person name="Haas B.J."/>
            <person name="Inman J.M."/>
            <person name="Kent R."/>
            <person name="Lemieux S."/>
            <person name="Malavazi I."/>
            <person name="Orvis J."/>
            <person name="Roemer T."/>
            <person name="Ronning C.M."/>
            <person name="Sundaram J.P."/>
            <person name="Sutton G."/>
            <person name="Turner G."/>
            <person name="Venter J.C."/>
            <person name="White O.R."/>
            <person name="Whitty B.R."/>
            <person name="Youngman P."/>
            <person name="Wolfe K.H."/>
            <person name="Goldman G.H."/>
            <person name="Wortman J.R."/>
            <person name="Jiang B."/>
            <person name="Denning D.W."/>
            <person name="Nierman W.C."/>
        </authorList>
    </citation>
    <scope>NUCLEOTIDE SEQUENCE [LARGE SCALE GENOMIC DNA]</scope>
    <source>
        <strain>ATCC 1007 / CBS 513.65 / DSM 816 / NCTC 3887 / NRRL 1 / QM 1276 / 107</strain>
    </source>
</reference>
<gene>
    <name type="primary">get1</name>
    <name type="ORF">ACLA_045650</name>
</gene>
<protein>
    <recommendedName>
        <fullName evidence="1">Protein get1</fullName>
    </recommendedName>
    <alternativeName>
        <fullName evidence="1">Guided entry of tail-anchored proteins 1</fullName>
    </alternativeName>
</protein>
<dbReference type="EMBL" id="DS027054">
    <property type="protein sequence ID" value="EAW10100.1"/>
    <property type="molecule type" value="Genomic_DNA"/>
</dbReference>
<dbReference type="RefSeq" id="XP_001271526.1">
    <property type="nucleotide sequence ID" value="XM_001271525.1"/>
</dbReference>
<dbReference type="SMR" id="A1CGU5"/>
<dbReference type="STRING" id="344612.A1CGU5"/>
<dbReference type="EnsemblFungi" id="EAW10100">
    <property type="protein sequence ID" value="EAW10100"/>
    <property type="gene ID" value="ACLA_045650"/>
</dbReference>
<dbReference type="GeneID" id="4704080"/>
<dbReference type="KEGG" id="act:ACLA_045650"/>
<dbReference type="VEuPathDB" id="FungiDB:ACLA_045650"/>
<dbReference type="eggNOG" id="KOG4253">
    <property type="taxonomic scope" value="Eukaryota"/>
</dbReference>
<dbReference type="HOGENOM" id="CLU_089418_1_0_1"/>
<dbReference type="OMA" id="AEWIISF"/>
<dbReference type="OrthoDB" id="69461at2759"/>
<dbReference type="Proteomes" id="UP000006701">
    <property type="component" value="Unassembled WGS sequence"/>
</dbReference>
<dbReference type="GO" id="GO:0005789">
    <property type="term" value="C:endoplasmic reticulum membrane"/>
    <property type="evidence" value="ECO:0007669"/>
    <property type="project" value="UniProtKB-SubCell"/>
</dbReference>
<dbReference type="GO" id="GO:0043529">
    <property type="term" value="C:GET complex"/>
    <property type="evidence" value="ECO:0007669"/>
    <property type="project" value="InterPro"/>
</dbReference>
<dbReference type="GO" id="GO:0043495">
    <property type="term" value="F:protein-membrane adaptor activity"/>
    <property type="evidence" value="ECO:0007669"/>
    <property type="project" value="TreeGrafter"/>
</dbReference>
<dbReference type="GO" id="GO:0071816">
    <property type="term" value="P:tail-anchored membrane protein insertion into ER membrane"/>
    <property type="evidence" value="ECO:0007669"/>
    <property type="project" value="InterPro"/>
</dbReference>
<dbReference type="FunFam" id="1.10.287.660:FF:000006">
    <property type="entry name" value="Protein GET1"/>
    <property type="match status" value="1"/>
</dbReference>
<dbReference type="Gene3D" id="1.10.287.660">
    <property type="entry name" value="Helix hairpin bin"/>
    <property type="match status" value="1"/>
</dbReference>
<dbReference type="HAMAP" id="MF_03113">
    <property type="entry name" value="Get1"/>
    <property type="match status" value="1"/>
</dbReference>
<dbReference type="InterPro" id="IPR028945">
    <property type="entry name" value="Get1"/>
</dbReference>
<dbReference type="InterPro" id="IPR027538">
    <property type="entry name" value="Get1_fungi"/>
</dbReference>
<dbReference type="InterPro" id="IPR029012">
    <property type="entry name" value="Helix_hairpin_bin_sf"/>
</dbReference>
<dbReference type="PANTHER" id="PTHR42650:SF1">
    <property type="entry name" value="GUIDED ENTRY OF TAIL-ANCHORED PROTEINS FACTOR 1"/>
    <property type="match status" value="1"/>
</dbReference>
<dbReference type="PANTHER" id="PTHR42650">
    <property type="entry name" value="TAIL-ANCHORED PROTEIN INSERTION RECEPTOR WRB"/>
    <property type="match status" value="1"/>
</dbReference>
<dbReference type="Pfam" id="PF04420">
    <property type="entry name" value="CHD5"/>
    <property type="match status" value="1"/>
</dbReference>
<feature type="chain" id="PRO_0000388575" description="Protein get1">
    <location>
        <begin position="1"/>
        <end position="200"/>
    </location>
</feature>
<feature type="topological domain" description="Lumenal" evidence="1">
    <location>
        <begin position="1"/>
        <end position="4"/>
    </location>
</feature>
<feature type="transmembrane region" description="Helical" evidence="1">
    <location>
        <begin position="5"/>
        <end position="24"/>
    </location>
</feature>
<feature type="topological domain" description="Cytoplasmic" evidence="1">
    <location>
        <begin position="25"/>
        <end position="110"/>
    </location>
</feature>
<feature type="transmembrane region" description="Helical" evidence="1">
    <location>
        <begin position="111"/>
        <end position="131"/>
    </location>
</feature>
<feature type="topological domain" description="Lumenal" evidence="1">
    <location>
        <begin position="132"/>
        <end position="155"/>
    </location>
</feature>
<feature type="transmembrane region" description="Helical" evidence="1">
    <location>
        <begin position="156"/>
        <end position="172"/>
    </location>
</feature>
<feature type="topological domain" description="Cytoplasmic" evidence="1">
    <location>
        <begin position="173"/>
        <end position="200"/>
    </location>
</feature>
<feature type="coiled-coil region" evidence="1">
    <location>
        <begin position="42"/>
        <end position="99"/>
    </location>
</feature>